<proteinExistence type="inferred from homology"/>
<gene>
    <name evidence="1" type="primary">rpmJ</name>
    <name type="ordered locus">Moth_2435</name>
</gene>
<organism>
    <name type="scientific">Moorella thermoacetica (strain ATCC 39073 / JCM 9320)</name>
    <dbReference type="NCBI Taxonomy" id="264732"/>
    <lineage>
        <taxon>Bacteria</taxon>
        <taxon>Bacillati</taxon>
        <taxon>Bacillota</taxon>
        <taxon>Clostridia</taxon>
        <taxon>Moorellales</taxon>
        <taxon>Moorellaceae</taxon>
        <taxon>Moorella</taxon>
    </lineage>
</organism>
<protein>
    <recommendedName>
        <fullName evidence="1">Large ribosomal subunit protein bL36</fullName>
    </recommendedName>
    <alternativeName>
        <fullName evidence="2">50S ribosomal protein L36</fullName>
    </alternativeName>
</protein>
<dbReference type="EMBL" id="CP000232">
    <property type="protein sequence ID" value="ABC20717.1"/>
    <property type="molecule type" value="Genomic_DNA"/>
</dbReference>
<dbReference type="RefSeq" id="YP_431260.1">
    <property type="nucleotide sequence ID" value="NC_007644.1"/>
</dbReference>
<dbReference type="SMR" id="Q2RFS2"/>
<dbReference type="STRING" id="264732.Moth_2435"/>
<dbReference type="EnsemblBacteria" id="ABC20717">
    <property type="protein sequence ID" value="ABC20717"/>
    <property type="gene ID" value="Moth_2435"/>
</dbReference>
<dbReference type="KEGG" id="mta:Moth_2435"/>
<dbReference type="PATRIC" id="fig|264732.11.peg.2653"/>
<dbReference type="eggNOG" id="COG0257">
    <property type="taxonomic scope" value="Bacteria"/>
</dbReference>
<dbReference type="HOGENOM" id="CLU_135723_6_2_9"/>
<dbReference type="OrthoDB" id="9802520at2"/>
<dbReference type="GO" id="GO:0005737">
    <property type="term" value="C:cytoplasm"/>
    <property type="evidence" value="ECO:0007669"/>
    <property type="project" value="UniProtKB-ARBA"/>
</dbReference>
<dbReference type="GO" id="GO:1990904">
    <property type="term" value="C:ribonucleoprotein complex"/>
    <property type="evidence" value="ECO:0007669"/>
    <property type="project" value="UniProtKB-KW"/>
</dbReference>
<dbReference type="GO" id="GO:0005840">
    <property type="term" value="C:ribosome"/>
    <property type="evidence" value="ECO:0007669"/>
    <property type="project" value="UniProtKB-KW"/>
</dbReference>
<dbReference type="GO" id="GO:0003735">
    <property type="term" value="F:structural constituent of ribosome"/>
    <property type="evidence" value="ECO:0007669"/>
    <property type="project" value="InterPro"/>
</dbReference>
<dbReference type="GO" id="GO:0006412">
    <property type="term" value="P:translation"/>
    <property type="evidence" value="ECO:0007669"/>
    <property type="project" value="UniProtKB-UniRule"/>
</dbReference>
<dbReference type="HAMAP" id="MF_00251">
    <property type="entry name" value="Ribosomal_bL36"/>
    <property type="match status" value="1"/>
</dbReference>
<dbReference type="InterPro" id="IPR000473">
    <property type="entry name" value="Ribosomal_bL36"/>
</dbReference>
<dbReference type="InterPro" id="IPR035977">
    <property type="entry name" value="Ribosomal_bL36_sp"/>
</dbReference>
<dbReference type="NCBIfam" id="TIGR01022">
    <property type="entry name" value="rpmJ_bact"/>
    <property type="match status" value="1"/>
</dbReference>
<dbReference type="PANTHER" id="PTHR42888">
    <property type="entry name" value="50S RIBOSOMAL PROTEIN L36, CHLOROPLASTIC"/>
    <property type="match status" value="1"/>
</dbReference>
<dbReference type="PANTHER" id="PTHR42888:SF1">
    <property type="entry name" value="LARGE RIBOSOMAL SUBUNIT PROTEIN BL36C"/>
    <property type="match status" value="1"/>
</dbReference>
<dbReference type="Pfam" id="PF00444">
    <property type="entry name" value="Ribosomal_L36"/>
    <property type="match status" value="1"/>
</dbReference>
<dbReference type="SUPFAM" id="SSF57840">
    <property type="entry name" value="Ribosomal protein L36"/>
    <property type="match status" value="1"/>
</dbReference>
<dbReference type="PROSITE" id="PS00828">
    <property type="entry name" value="RIBOSOMAL_L36"/>
    <property type="match status" value="1"/>
</dbReference>
<reference key="1">
    <citation type="journal article" date="2008" name="Environ. Microbiol.">
        <title>The complete genome sequence of Moorella thermoacetica (f. Clostridium thermoaceticum).</title>
        <authorList>
            <person name="Pierce E."/>
            <person name="Xie G."/>
            <person name="Barabote R.D."/>
            <person name="Saunders E."/>
            <person name="Han C.S."/>
            <person name="Detter J.C."/>
            <person name="Richardson P."/>
            <person name="Brettin T.S."/>
            <person name="Das A."/>
            <person name="Ljungdahl L.G."/>
            <person name="Ragsdale S.W."/>
        </authorList>
    </citation>
    <scope>NUCLEOTIDE SEQUENCE [LARGE SCALE GENOMIC DNA]</scope>
    <source>
        <strain>ATCC 39073 / JCM 9320</strain>
    </source>
</reference>
<accession>Q2RFS2</accession>
<keyword id="KW-0687">Ribonucleoprotein</keyword>
<keyword id="KW-0689">Ribosomal protein</keyword>
<sequence>MKVKPSVKPICEKCKVIKRKGKVMVICENPKHKQKQG</sequence>
<evidence type="ECO:0000255" key="1">
    <source>
        <dbReference type="HAMAP-Rule" id="MF_00251"/>
    </source>
</evidence>
<evidence type="ECO:0000305" key="2"/>
<comment type="similarity">
    <text evidence="1">Belongs to the bacterial ribosomal protein bL36 family.</text>
</comment>
<feature type="chain" id="PRO_0000302240" description="Large ribosomal subunit protein bL36">
    <location>
        <begin position="1"/>
        <end position="37"/>
    </location>
</feature>
<name>RL36_MOOTA</name>